<comment type="catalytic activity">
    <reaction evidence="1">
        <text>tRNA(His) + L-histidine + ATP = L-histidyl-tRNA(His) + AMP + diphosphate + H(+)</text>
        <dbReference type="Rhea" id="RHEA:17313"/>
        <dbReference type="Rhea" id="RHEA-COMP:9665"/>
        <dbReference type="Rhea" id="RHEA-COMP:9689"/>
        <dbReference type="ChEBI" id="CHEBI:15378"/>
        <dbReference type="ChEBI" id="CHEBI:30616"/>
        <dbReference type="ChEBI" id="CHEBI:33019"/>
        <dbReference type="ChEBI" id="CHEBI:57595"/>
        <dbReference type="ChEBI" id="CHEBI:78442"/>
        <dbReference type="ChEBI" id="CHEBI:78527"/>
        <dbReference type="ChEBI" id="CHEBI:456215"/>
        <dbReference type="EC" id="6.1.1.21"/>
    </reaction>
</comment>
<comment type="subcellular location">
    <subcellularLocation>
        <location evidence="1">Cytoplasm</location>
    </subcellularLocation>
</comment>
<comment type="similarity">
    <text evidence="1">Belongs to the class-II aminoacyl-tRNA synthetase family.</text>
</comment>
<organism>
    <name type="scientific">Saccharolobus islandicus (strain M.14.25 / Kamchatka #1)</name>
    <name type="common">Sulfolobus islandicus</name>
    <dbReference type="NCBI Taxonomy" id="427317"/>
    <lineage>
        <taxon>Archaea</taxon>
        <taxon>Thermoproteota</taxon>
        <taxon>Thermoprotei</taxon>
        <taxon>Sulfolobales</taxon>
        <taxon>Sulfolobaceae</taxon>
        <taxon>Saccharolobus</taxon>
    </lineage>
</organism>
<reference key="1">
    <citation type="journal article" date="2009" name="Proc. Natl. Acad. Sci. U.S.A.">
        <title>Biogeography of the Sulfolobus islandicus pan-genome.</title>
        <authorList>
            <person name="Reno M.L."/>
            <person name="Held N.L."/>
            <person name="Fields C.J."/>
            <person name="Burke P.V."/>
            <person name="Whitaker R.J."/>
        </authorList>
    </citation>
    <scope>NUCLEOTIDE SEQUENCE [LARGE SCALE GENOMIC DNA]</scope>
    <source>
        <strain>M.14.25 / Kamchatka #1</strain>
    </source>
</reference>
<sequence>MTKFETVRGMKDYIGIDAEKIRYLESTFRDLAIKYGYSEIITPVVEEFKLFALKGGEELRETMYVFKDKADRELSLRPEITPSVARAYIQNLQSSPKPIRLFYFGTVYRYDEPQYGRYREFRQAGIEMIGDSSILADLEVLDLLYNFYDKLNLSNDITIKINNIGIFRKIMDKYNIEDNLQEHILHLIDKNKINEALDILEKNLKNKDIIDFFNKILTKKDTKLEDIESLAELEEVSRLDIKSEFLYLFRLSRILSNLNIKFKIDLGFVRGLAYYTGLIFEVLHPSVQFSIAGGGRYDKLIELYGGLPSPAIGFAIGVERTLLVIKDLKVEEPVNVIVIGMSEDTIPSMFMVSRILRKEEYKVVINTKDQPLSKLLPYYASQGFKVAIIIGKQELEKNMITVRNLITRKQISVPLENIEDAIKQTL</sequence>
<proteinExistence type="inferred from homology"/>
<protein>
    <recommendedName>
        <fullName evidence="1">Histidine--tRNA ligase</fullName>
        <ecNumber evidence="1">6.1.1.21</ecNumber>
    </recommendedName>
    <alternativeName>
        <fullName evidence="1">Histidyl-tRNA synthetase</fullName>
        <shortName evidence="1">HisRS</shortName>
    </alternativeName>
</protein>
<keyword id="KW-0030">Aminoacyl-tRNA synthetase</keyword>
<keyword id="KW-0067">ATP-binding</keyword>
<keyword id="KW-0963">Cytoplasm</keyword>
<keyword id="KW-0436">Ligase</keyword>
<keyword id="KW-0547">Nucleotide-binding</keyword>
<keyword id="KW-0648">Protein biosynthesis</keyword>
<dbReference type="EC" id="6.1.1.21" evidence="1"/>
<dbReference type="EMBL" id="CP001400">
    <property type="protein sequence ID" value="ACP38597.1"/>
    <property type="molecule type" value="Genomic_DNA"/>
</dbReference>
<dbReference type="RefSeq" id="WP_012711827.1">
    <property type="nucleotide sequence ID" value="NC_012588.1"/>
</dbReference>
<dbReference type="SMR" id="C3MY40"/>
<dbReference type="GeneID" id="84053416"/>
<dbReference type="KEGG" id="sia:M1425_1853"/>
<dbReference type="HOGENOM" id="CLU_025113_3_1_2"/>
<dbReference type="Proteomes" id="UP000001350">
    <property type="component" value="Chromosome"/>
</dbReference>
<dbReference type="GO" id="GO:0005737">
    <property type="term" value="C:cytoplasm"/>
    <property type="evidence" value="ECO:0007669"/>
    <property type="project" value="UniProtKB-SubCell"/>
</dbReference>
<dbReference type="GO" id="GO:0005524">
    <property type="term" value="F:ATP binding"/>
    <property type="evidence" value="ECO:0007669"/>
    <property type="project" value="UniProtKB-UniRule"/>
</dbReference>
<dbReference type="GO" id="GO:0004821">
    <property type="term" value="F:histidine-tRNA ligase activity"/>
    <property type="evidence" value="ECO:0007669"/>
    <property type="project" value="UniProtKB-UniRule"/>
</dbReference>
<dbReference type="GO" id="GO:0006427">
    <property type="term" value="P:histidyl-tRNA aminoacylation"/>
    <property type="evidence" value="ECO:0007669"/>
    <property type="project" value="UniProtKB-UniRule"/>
</dbReference>
<dbReference type="GO" id="GO:0000105">
    <property type="term" value="P:L-histidine biosynthetic process"/>
    <property type="evidence" value="ECO:0007669"/>
    <property type="project" value="InterPro"/>
</dbReference>
<dbReference type="CDD" id="cd00773">
    <property type="entry name" value="HisRS-like_core"/>
    <property type="match status" value="1"/>
</dbReference>
<dbReference type="FunFam" id="3.30.930.10:FF:000121">
    <property type="entry name" value="Histidine--tRNA ligase"/>
    <property type="match status" value="1"/>
</dbReference>
<dbReference type="Gene3D" id="3.40.50.800">
    <property type="entry name" value="Anticodon-binding domain"/>
    <property type="match status" value="1"/>
</dbReference>
<dbReference type="Gene3D" id="3.30.930.10">
    <property type="entry name" value="Bira Bifunctional Protein, Domain 2"/>
    <property type="match status" value="1"/>
</dbReference>
<dbReference type="HAMAP" id="MF_00127">
    <property type="entry name" value="His_tRNA_synth"/>
    <property type="match status" value="1"/>
</dbReference>
<dbReference type="HAMAP" id="MF_00125">
    <property type="entry name" value="HisZ"/>
    <property type="match status" value="1"/>
</dbReference>
<dbReference type="InterPro" id="IPR006195">
    <property type="entry name" value="aa-tRNA-synth_II"/>
</dbReference>
<dbReference type="InterPro" id="IPR045864">
    <property type="entry name" value="aa-tRNA-synth_II/BPL/LPL"/>
</dbReference>
<dbReference type="InterPro" id="IPR004154">
    <property type="entry name" value="Anticodon-bd"/>
</dbReference>
<dbReference type="InterPro" id="IPR036621">
    <property type="entry name" value="Anticodon-bd_dom_sf"/>
</dbReference>
<dbReference type="InterPro" id="IPR015807">
    <property type="entry name" value="His-tRNA-ligase"/>
</dbReference>
<dbReference type="InterPro" id="IPR041715">
    <property type="entry name" value="HisRS-like_core"/>
</dbReference>
<dbReference type="InterPro" id="IPR004516">
    <property type="entry name" value="HisRS/HisZ"/>
</dbReference>
<dbReference type="InterPro" id="IPR004517">
    <property type="entry name" value="HisZ"/>
</dbReference>
<dbReference type="NCBIfam" id="TIGR00442">
    <property type="entry name" value="hisS"/>
    <property type="match status" value="1"/>
</dbReference>
<dbReference type="PANTHER" id="PTHR43707:SF1">
    <property type="entry name" value="HISTIDINE--TRNA LIGASE, MITOCHONDRIAL-RELATED"/>
    <property type="match status" value="1"/>
</dbReference>
<dbReference type="PANTHER" id="PTHR43707">
    <property type="entry name" value="HISTIDYL-TRNA SYNTHETASE"/>
    <property type="match status" value="1"/>
</dbReference>
<dbReference type="Pfam" id="PF03129">
    <property type="entry name" value="HGTP_anticodon"/>
    <property type="match status" value="1"/>
</dbReference>
<dbReference type="Pfam" id="PF13393">
    <property type="entry name" value="tRNA-synt_His"/>
    <property type="match status" value="1"/>
</dbReference>
<dbReference type="PIRSF" id="PIRSF001549">
    <property type="entry name" value="His-tRNA_synth"/>
    <property type="match status" value="1"/>
</dbReference>
<dbReference type="SUPFAM" id="SSF52954">
    <property type="entry name" value="Class II aaRS ABD-related"/>
    <property type="match status" value="1"/>
</dbReference>
<dbReference type="SUPFAM" id="SSF55681">
    <property type="entry name" value="Class II aaRS and biotin synthetases"/>
    <property type="match status" value="1"/>
</dbReference>
<dbReference type="PROSITE" id="PS50862">
    <property type="entry name" value="AA_TRNA_LIGASE_II"/>
    <property type="match status" value="1"/>
</dbReference>
<name>SYH_SACI4</name>
<accession>C3MY40</accession>
<evidence type="ECO:0000255" key="1">
    <source>
        <dbReference type="HAMAP-Rule" id="MF_00127"/>
    </source>
</evidence>
<feature type="chain" id="PRO_1000203151" description="Histidine--tRNA ligase">
    <location>
        <begin position="1"/>
        <end position="426"/>
    </location>
</feature>
<gene>
    <name evidence="1" type="primary">hisS</name>
    <name type="ordered locus">M1425_1853</name>
</gene>